<protein>
    <recommendedName>
        <fullName evidence="1">Small ribosomal subunit protein bS18</fullName>
    </recommendedName>
    <alternativeName>
        <fullName evidence="3">30S ribosomal protein S18</fullName>
    </alternativeName>
</protein>
<dbReference type="EMBL" id="AE000513">
    <property type="protein sequence ID" value="AAF09693.1"/>
    <property type="molecule type" value="Genomic_DNA"/>
</dbReference>
<dbReference type="PIR" id="B75559">
    <property type="entry name" value="B75559"/>
</dbReference>
<dbReference type="RefSeq" id="NP_293827.1">
    <property type="nucleotide sequence ID" value="NC_001263.1"/>
</dbReference>
<dbReference type="RefSeq" id="WP_010886749.1">
    <property type="nucleotide sequence ID" value="NZ_JMLF01000021.1"/>
</dbReference>
<dbReference type="SMR" id="Q9RY50"/>
<dbReference type="FunCoup" id="Q9RY50">
    <property type="interactions" value="405"/>
</dbReference>
<dbReference type="STRING" id="243230.DR_0101"/>
<dbReference type="PaxDb" id="243230-DR_0101"/>
<dbReference type="EnsemblBacteria" id="AAF09693">
    <property type="protein sequence ID" value="AAF09693"/>
    <property type="gene ID" value="DR_0101"/>
</dbReference>
<dbReference type="GeneID" id="69516331"/>
<dbReference type="KEGG" id="dra:DR_0101"/>
<dbReference type="PATRIC" id="fig|243230.17.peg.266"/>
<dbReference type="eggNOG" id="COG0238">
    <property type="taxonomic scope" value="Bacteria"/>
</dbReference>
<dbReference type="HOGENOM" id="CLU_148710_0_3_0"/>
<dbReference type="InParanoid" id="Q9RY50"/>
<dbReference type="OrthoDB" id="9812008at2"/>
<dbReference type="Proteomes" id="UP000002524">
    <property type="component" value="Chromosome 1"/>
</dbReference>
<dbReference type="GO" id="GO:0022627">
    <property type="term" value="C:cytosolic small ribosomal subunit"/>
    <property type="evidence" value="ECO:0000318"/>
    <property type="project" value="GO_Central"/>
</dbReference>
<dbReference type="GO" id="GO:0070181">
    <property type="term" value="F:small ribosomal subunit rRNA binding"/>
    <property type="evidence" value="ECO:0000318"/>
    <property type="project" value="GO_Central"/>
</dbReference>
<dbReference type="GO" id="GO:0003735">
    <property type="term" value="F:structural constituent of ribosome"/>
    <property type="evidence" value="ECO:0000318"/>
    <property type="project" value="GO_Central"/>
</dbReference>
<dbReference type="GO" id="GO:0006412">
    <property type="term" value="P:translation"/>
    <property type="evidence" value="ECO:0000318"/>
    <property type="project" value="GO_Central"/>
</dbReference>
<dbReference type="FunFam" id="4.10.640.10:FF:000015">
    <property type="entry name" value="30S ribosomal protein S18"/>
    <property type="match status" value="1"/>
</dbReference>
<dbReference type="Gene3D" id="4.10.640.10">
    <property type="entry name" value="Ribosomal protein S18"/>
    <property type="match status" value="1"/>
</dbReference>
<dbReference type="HAMAP" id="MF_00270">
    <property type="entry name" value="Ribosomal_bS18"/>
    <property type="match status" value="1"/>
</dbReference>
<dbReference type="InterPro" id="IPR001648">
    <property type="entry name" value="Ribosomal_bS18"/>
</dbReference>
<dbReference type="InterPro" id="IPR036870">
    <property type="entry name" value="Ribosomal_bS18_sf"/>
</dbReference>
<dbReference type="NCBIfam" id="TIGR00165">
    <property type="entry name" value="S18"/>
    <property type="match status" value="1"/>
</dbReference>
<dbReference type="PANTHER" id="PTHR13479">
    <property type="entry name" value="30S RIBOSOMAL PROTEIN S18"/>
    <property type="match status" value="1"/>
</dbReference>
<dbReference type="PANTHER" id="PTHR13479:SF40">
    <property type="entry name" value="SMALL RIBOSOMAL SUBUNIT PROTEIN BS18M"/>
    <property type="match status" value="1"/>
</dbReference>
<dbReference type="Pfam" id="PF01084">
    <property type="entry name" value="Ribosomal_S18"/>
    <property type="match status" value="1"/>
</dbReference>
<dbReference type="PRINTS" id="PR00974">
    <property type="entry name" value="RIBOSOMALS18"/>
</dbReference>
<dbReference type="SUPFAM" id="SSF46911">
    <property type="entry name" value="Ribosomal protein S18"/>
    <property type="match status" value="1"/>
</dbReference>
<accession>Q9RY50</accession>
<organism>
    <name type="scientific">Deinococcus radiodurans (strain ATCC 13939 / DSM 20539 / JCM 16871 / CCUG 27074 / LMG 4051 / NBRC 15346 / NCIMB 9279 / VKM B-1422 / R1)</name>
    <dbReference type="NCBI Taxonomy" id="243230"/>
    <lineage>
        <taxon>Bacteria</taxon>
        <taxon>Thermotogati</taxon>
        <taxon>Deinococcota</taxon>
        <taxon>Deinococci</taxon>
        <taxon>Deinococcales</taxon>
        <taxon>Deinococcaceae</taxon>
        <taxon>Deinococcus</taxon>
    </lineage>
</organism>
<reference key="1">
    <citation type="journal article" date="1999" name="Science">
        <title>Genome sequence of the radioresistant bacterium Deinococcus radiodurans R1.</title>
        <authorList>
            <person name="White O."/>
            <person name="Eisen J.A."/>
            <person name="Heidelberg J.F."/>
            <person name="Hickey E.K."/>
            <person name="Peterson J.D."/>
            <person name="Dodson R.J."/>
            <person name="Haft D.H."/>
            <person name="Gwinn M.L."/>
            <person name="Nelson W.C."/>
            <person name="Richardson D.L."/>
            <person name="Moffat K.S."/>
            <person name="Qin H."/>
            <person name="Jiang L."/>
            <person name="Pamphile W."/>
            <person name="Crosby M."/>
            <person name="Shen M."/>
            <person name="Vamathevan J.J."/>
            <person name="Lam P."/>
            <person name="McDonald L.A."/>
            <person name="Utterback T.R."/>
            <person name="Zalewski C."/>
            <person name="Makarova K.S."/>
            <person name="Aravind L."/>
            <person name="Daly M.J."/>
            <person name="Minton K.W."/>
            <person name="Fleischmann R.D."/>
            <person name="Ketchum K.A."/>
            <person name="Nelson K.E."/>
            <person name="Salzberg S.L."/>
            <person name="Smith H.O."/>
            <person name="Venter J.C."/>
            <person name="Fraser C.M."/>
        </authorList>
    </citation>
    <scope>NUCLEOTIDE SEQUENCE [LARGE SCALE GENOMIC DNA]</scope>
    <source>
        <strain>ATCC 13939 / DSM 20539 / JCM 16871 / CCUG 27074 / LMG 4051 / NBRC 15346 / NCIMB 9279 / VKM B-1422 / R1</strain>
    </source>
</reference>
<comment type="function">
    <text evidence="1">Binds as a heterodimer with protein bS6 to the central domain of the 16S rRNA, where it helps stabilize the platform of the 30S subunit.</text>
</comment>
<comment type="subunit">
    <text evidence="1">Part of the 30S ribosomal subunit. Forms a tight heterodimer with protein bS6.</text>
</comment>
<comment type="similarity">
    <text evidence="1">Belongs to the bacterial ribosomal protein bS18 family.</text>
</comment>
<feature type="chain" id="PRO_0000111150" description="Small ribosomal subunit protein bS18">
    <location>
        <begin position="1"/>
        <end position="92"/>
    </location>
</feature>
<feature type="region of interest" description="Disordered" evidence="2">
    <location>
        <begin position="1"/>
        <end position="28"/>
    </location>
</feature>
<feature type="compositionally biased region" description="Basic residues" evidence="2">
    <location>
        <begin position="12"/>
        <end position="22"/>
    </location>
</feature>
<evidence type="ECO:0000255" key="1">
    <source>
        <dbReference type="HAMAP-Rule" id="MF_00270"/>
    </source>
</evidence>
<evidence type="ECO:0000256" key="2">
    <source>
        <dbReference type="SAM" id="MobiDB-lite"/>
    </source>
</evidence>
<evidence type="ECO:0000305" key="3"/>
<proteinExistence type="inferred from homology"/>
<gene>
    <name evidence="1" type="primary">rpsR</name>
    <name type="ordered locus">DR_0101</name>
</gene>
<name>RS18_DEIRA</name>
<keyword id="KW-1185">Reference proteome</keyword>
<keyword id="KW-0687">Ribonucleoprotein</keyword>
<keyword id="KW-0689">Ribosomal protein</keyword>
<keyword id="KW-0694">RNA-binding</keyword>
<keyword id="KW-0699">rRNA-binding</keyword>
<sequence>MTQQGNSGERKPRGKGPKRPRKPKVDPFSIGELEITDYKDVKMLRRFVSDTGKILPRRRTGLSAKHQRRIAQTIKVARQLALLPYTEKLVRK</sequence>